<feature type="chain" id="PRO_1000007094" description="Large ribosomal subunit protein bL12">
    <location>
        <begin position="1"/>
        <end position="126"/>
    </location>
</feature>
<proteinExistence type="inferred from homology"/>
<organism>
    <name type="scientific">Rhizorhabdus wittichii (strain DSM 6014 / CCUG 31198 / JCM 15750 / NBRC 105917 / EY 4224 / RW1)</name>
    <name type="common">Sphingomonas wittichii</name>
    <dbReference type="NCBI Taxonomy" id="392499"/>
    <lineage>
        <taxon>Bacteria</taxon>
        <taxon>Pseudomonadati</taxon>
        <taxon>Pseudomonadota</taxon>
        <taxon>Alphaproteobacteria</taxon>
        <taxon>Sphingomonadales</taxon>
        <taxon>Sphingomonadaceae</taxon>
        <taxon>Rhizorhabdus</taxon>
    </lineage>
</organism>
<reference key="1">
    <citation type="journal article" date="2010" name="J. Bacteriol.">
        <title>Genome sequence of the dioxin-mineralizing bacterium Sphingomonas wittichii RW1.</title>
        <authorList>
            <person name="Miller T.R."/>
            <person name="Delcher A.L."/>
            <person name="Salzberg S.L."/>
            <person name="Saunders E."/>
            <person name="Detter J.C."/>
            <person name="Halden R.U."/>
        </authorList>
    </citation>
    <scope>NUCLEOTIDE SEQUENCE [LARGE SCALE GENOMIC DNA]</scope>
    <source>
        <strain>DSM 6014 / CCUG 31198 / JCM 15750 / NBRC 105917 / EY 4224 / RW1</strain>
    </source>
</reference>
<comment type="function">
    <text evidence="1">Forms part of the ribosomal stalk which helps the ribosome interact with GTP-bound translation factors. Is thus essential for accurate translation.</text>
</comment>
<comment type="subunit">
    <text evidence="1">Homodimer. Part of the ribosomal stalk of the 50S ribosomal subunit. Forms a multimeric L10(L12)X complex, where L10 forms an elongated spine to which 2 to 4 L12 dimers bind in a sequential fashion. Binds GTP-bound translation factors.</text>
</comment>
<comment type="similarity">
    <text evidence="1">Belongs to the bacterial ribosomal protein bL12 family.</text>
</comment>
<protein>
    <recommendedName>
        <fullName evidence="1">Large ribosomal subunit protein bL12</fullName>
    </recommendedName>
    <alternativeName>
        <fullName evidence="2">50S ribosomal protein L7/L12</fullName>
    </alternativeName>
</protein>
<sequence>MADLQKLVDDLSALTVLEAAELSKLLEEKWGVSAAAAVAVAAPAGGAGAGAPAAEVKDEFDVILTGDGGKKINVIKEVRAITGLGLTEAKTLVESAPKAVKEGVNKDEAEKLKKQLEEAGATVELK</sequence>
<keyword id="KW-1185">Reference proteome</keyword>
<keyword id="KW-0687">Ribonucleoprotein</keyword>
<keyword id="KW-0689">Ribosomal protein</keyword>
<dbReference type="EMBL" id="CP000699">
    <property type="protein sequence ID" value="ABQ69822.1"/>
    <property type="molecule type" value="Genomic_DNA"/>
</dbReference>
<dbReference type="SMR" id="A5VC06"/>
<dbReference type="STRING" id="392499.Swit_3476"/>
<dbReference type="PaxDb" id="392499-Swit_3476"/>
<dbReference type="KEGG" id="swi:Swit_3476"/>
<dbReference type="eggNOG" id="COG0222">
    <property type="taxonomic scope" value="Bacteria"/>
</dbReference>
<dbReference type="HOGENOM" id="CLU_086499_3_0_5"/>
<dbReference type="OrthoDB" id="9811748at2"/>
<dbReference type="Proteomes" id="UP000001989">
    <property type="component" value="Chromosome"/>
</dbReference>
<dbReference type="GO" id="GO:0022625">
    <property type="term" value="C:cytosolic large ribosomal subunit"/>
    <property type="evidence" value="ECO:0007669"/>
    <property type="project" value="TreeGrafter"/>
</dbReference>
<dbReference type="GO" id="GO:0003729">
    <property type="term" value="F:mRNA binding"/>
    <property type="evidence" value="ECO:0007669"/>
    <property type="project" value="TreeGrafter"/>
</dbReference>
<dbReference type="GO" id="GO:0003735">
    <property type="term" value="F:structural constituent of ribosome"/>
    <property type="evidence" value="ECO:0007669"/>
    <property type="project" value="InterPro"/>
</dbReference>
<dbReference type="GO" id="GO:0006412">
    <property type="term" value="P:translation"/>
    <property type="evidence" value="ECO:0007669"/>
    <property type="project" value="UniProtKB-UniRule"/>
</dbReference>
<dbReference type="CDD" id="cd00387">
    <property type="entry name" value="Ribosomal_L7_L12"/>
    <property type="match status" value="1"/>
</dbReference>
<dbReference type="FunFam" id="1.20.5.710:FF:000007">
    <property type="entry name" value="50S ribosomal protein L7/L12"/>
    <property type="match status" value="1"/>
</dbReference>
<dbReference type="FunFam" id="3.30.1390.10:FF:000001">
    <property type="entry name" value="50S ribosomal protein L7/L12"/>
    <property type="match status" value="1"/>
</dbReference>
<dbReference type="Gene3D" id="3.30.1390.10">
    <property type="match status" value="1"/>
</dbReference>
<dbReference type="Gene3D" id="1.20.5.710">
    <property type="entry name" value="Single helix bin"/>
    <property type="match status" value="1"/>
</dbReference>
<dbReference type="HAMAP" id="MF_00368">
    <property type="entry name" value="Ribosomal_bL12"/>
    <property type="match status" value="1"/>
</dbReference>
<dbReference type="InterPro" id="IPR000206">
    <property type="entry name" value="Ribosomal_bL12"/>
</dbReference>
<dbReference type="InterPro" id="IPR013823">
    <property type="entry name" value="Ribosomal_bL12_C"/>
</dbReference>
<dbReference type="InterPro" id="IPR014719">
    <property type="entry name" value="Ribosomal_bL12_C/ClpS-like"/>
</dbReference>
<dbReference type="InterPro" id="IPR008932">
    <property type="entry name" value="Ribosomal_bL12_oligo"/>
</dbReference>
<dbReference type="InterPro" id="IPR036235">
    <property type="entry name" value="Ribosomal_bL12_oligo_N_sf"/>
</dbReference>
<dbReference type="NCBIfam" id="TIGR00855">
    <property type="entry name" value="L12"/>
    <property type="match status" value="1"/>
</dbReference>
<dbReference type="PANTHER" id="PTHR45987">
    <property type="entry name" value="39S RIBOSOMAL PROTEIN L12"/>
    <property type="match status" value="1"/>
</dbReference>
<dbReference type="PANTHER" id="PTHR45987:SF4">
    <property type="entry name" value="LARGE RIBOSOMAL SUBUNIT PROTEIN BL12M"/>
    <property type="match status" value="1"/>
</dbReference>
<dbReference type="Pfam" id="PF00542">
    <property type="entry name" value="Ribosomal_L12"/>
    <property type="match status" value="1"/>
</dbReference>
<dbReference type="Pfam" id="PF16320">
    <property type="entry name" value="Ribosomal_L12_N"/>
    <property type="match status" value="1"/>
</dbReference>
<dbReference type="SUPFAM" id="SSF54736">
    <property type="entry name" value="ClpS-like"/>
    <property type="match status" value="1"/>
</dbReference>
<dbReference type="SUPFAM" id="SSF48300">
    <property type="entry name" value="Ribosomal protein L7/12, oligomerisation (N-terminal) domain"/>
    <property type="match status" value="1"/>
</dbReference>
<evidence type="ECO:0000255" key="1">
    <source>
        <dbReference type="HAMAP-Rule" id="MF_00368"/>
    </source>
</evidence>
<evidence type="ECO:0000305" key="2"/>
<gene>
    <name evidence="1" type="primary">rplL</name>
    <name type="ordered locus">Swit_3476</name>
</gene>
<name>RL7_RHIWR</name>
<accession>A5VC06</accession>